<reference key="1">
    <citation type="journal article" date="2011" name="J. Bacteriol.">
        <title>Genome sequence of lineage III Listeria monocytogenes strain HCC23.</title>
        <authorList>
            <person name="Steele C.L."/>
            <person name="Donaldson J.R."/>
            <person name="Paul D."/>
            <person name="Banes M.M."/>
            <person name="Arick T."/>
            <person name="Bridges S.M."/>
            <person name="Lawrence M.L."/>
        </authorList>
    </citation>
    <scope>NUCLEOTIDE SEQUENCE [LARGE SCALE GENOMIC DNA]</scope>
    <source>
        <strain>HCC23</strain>
    </source>
</reference>
<keyword id="KW-0414">Isoprene biosynthesis</keyword>
<keyword id="KW-0456">Lyase</keyword>
<keyword id="KW-0479">Metal-binding</keyword>
<proteinExistence type="inferred from homology"/>
<dbReference type="EC" id="4.6.1.12" evidence="1"/>
<dbReference type="EMBL" id="CP001175">
    <property type="protein sequence ID" value="ACK40741.1"/>
    <property type="molecule type" value="Genomic_DNA"/>
</dbReference>
<dbReference type="RefSeq" id="WP_003740385.1">
    <property type="nucleotide sequence ID" value="NC_011660.1"/>
</dbReference>
<dbReference type="SMR" id="B8DF19"/>
<dbReference type="KEGG" id="lmh:LMHCC_2404"/>
<dbReference type="HOGENOM" id="CLU_084630_2_0_9"/>
<dbReference type="UniPathway" id="UPA00056">
    <property type="reaction ID" value="UER00095"/>
</dbReference>
<dbReference type="GO" id="GO:0008685">
    <property type="term" value="F:2-C-methyl-D-erythritol 2,4-cyclodiphosphate synthase activity"/>
    <property type="evidence" value="ECO:0007669"/>
    <property type="project" value="UniProtKB-UniRule"/>
</dbReference>
<dbReference type="GO" id="GO:0046872">
    <property type="term" value="F:metal ion binding"/>
    <property type="evidence" value="ECO:0007669"/>
    <property type="project" value="UniProtKB-KW"/>
</dbReference>
<dbReference type="GO" id="GO:0019288">
    <property type="term" value="P:isopentenyl diphosphate biosynthetic process, methylerythritol 4-phosphate pathway"/>
    <property type="evidence" value="ECO:0007669"/>
    <property type="project" value="UniProtKB-UniRule"/>
</dbReference>
<dbReference type="GO" id="GO:0016114">
    <property type="term" value="P:terpenoid biosynthetic process"/>
    <property type="evidence" value="ECO:0007669"/>
    <property type="project" value="InterPro"/>
</dbReference>
<dbReference type="CDD" id="cd00554">
    <property type="entry name" value="MECDP_synthase"/>
    <property type="match status" value="1"/>
</dbReference>
<dbReference type="FunFam" id="3.30.1330.50:FF:000001">
    <property type="entry name" value="2-C-methyl-D-erythritol 2,4-cyclodiphosphate synthase"/>
    <property type="match status" value="1"/>
</dbReference>
<dbReference type="Gene3D" id="3.30.1330.50">
    <property type="entry name" value="2-C-methyl-D-erythritol 2,4-cyclodiphosphate synthase"/>
    <property type="match status" value="1"/>
</dbReference>
<dbReference type="HAMAP" id="MF_00107">
    <property type="entry name" value="IspF"/>
    <property type="match status" value="1"/>
</dbReference>
<dbReference type="InterPro" id="IPR003526">
    <property type="entry name" value="MECDP_synthase"/>
</dbReference>
<dbReference type="InterPro" id="IPR020555">
    <property type="entry name" value="MECDP_synthase_CS"/>
</dbReference>
<dbReference type="InterPro" id="IPR036571">
    <property type="entry name" value="MECDP_synthase_sf"/>
</dbReference>
<dbReference type="NCBIfam" id="TIGR00151">
    <property type="entry name" value="ispF"/>
    <property type="match status" value="1"/>
</dbReference>
<dbReference type="PANTHER" id="PTHR43181">
    <property type="entry name" value="2-C-METHYL-D-ERYTHRITOL 2,4-CYCLODIPHOSPHATE SYNTHASE, CHLOROPLASTIC"/>
    <property type="match status" value="1"/>
</dbReference>
<dbReference type="PANTHER" id="PTHR43181:SF1">
    <property type="entry name" value="2-C-METHYL-D-ERYTHRITOL 2,4-CYCLODIPHOSPHATE SYNTHASE, CHLOROPLASTIC"/>
    <property type="match status" value="1"/>
</dbReference>
<dbReference type="Pfam" id="PF02542">
    <property type="entry name" value="YgbB"/>
    <property type="match status" value="1"/>
</dbReference>
<dbReference type="SUPFAM" id="SSF69765">
    <property type="entry name" value="IpsF-like"/>
    <property type="match status" value="1"/>
</dbReference>
<dbReference type="PROSITE" id="PS01350">
    <property type="entry name" value="ISPF"/>
    <property type="match status" value="1"/>
</dbReference>
<sequence length="157" mass="17016">MIRIGQGYDVHKLAYDRELIVGGIKIPYEKGLLGHSDADVLLHAITDAIIGAIGAGDIGHFFPDTDMAFKDADSAELLAEIWQKVEADGFRLGNLDATIIAEKPKMAPYVEQMKLRIAELLHADSAQVNVKATTTEKLGFTGREEGIASLAVVLLEK</sequence>
<gene>
    <name evidence="1" type="primary">ispF</name>
    <name type="ordered locus">LMHCC_2404</name>
</gene>
<name>ISPF_LISMH</name>
<feature type="chain" id="PRO_1000190713" description="2-C-methyl-D-erythritol 2,4-cyclodiphosphate synthase">
    <location>
        <begin position="1"/>
        <end position="157"/>
    </location>
</feature>
<feature type="binding site" evidence="1">
    <location>
        <begin position="9"/>
        <end position="11"/>
    </location>
    <ligand>
        <name>4-CDP-2-C-methyl-D-erythritol 2-phosphate</name>
        <dbReference type="ChEBI" id="CHEBI:57919"/>
    </ligand>
</feature>
<feature type="binding site" evidence="1">
    <location>
        <position position="9"/>
    </location>
    <ligand>
        <name>a divalent metal cation</name>
        <dbReference type="ChEBI" id="CHEBI:60240"/>
    </ligand>
</feature>
<feature type="binding site" evidence="1">
    <location>
        <position position="11"/>
    </location>
    <ligand>
        <name>a divalent metal cation</name>
        <dbReference type="ChEBI" id="CHEBI:60240"/>
    </ligand>
</feature>
<feature type="binding site" evidence="1">
    <location>
        <begin position="35"/>
        <end position="36"/>
    </location>
    <ligand>
        <name>4-CDP-2-C-methyl-D-erythritol 2-phosphate</name>
        <dbReference type="ChEBI" id="CHEBI:57919"/>
    </ligand>
</feature>
<feature type="binding site" evidence="1">
    <location>
        <position position="43"/>
    </location>
    <ligand>
        <name>a divalent metal cation</name>
        <dbReference type="ChEBI" id="CHEBI:60240"/>
    </ligand>
</feature>
<feature type="binding site" evidence="1">
    <location>
        <begin position="57"/>
        <end position="59"/>
    </location>
    <ligand>
        <name>4-CDP-2-C-methyl-D-erythritol 2-phosphate</name>
        <dbReference type="ChEBI" id="CHEBI:57919"/>
    </ligand>
</feature>
<feature type="binding site" evidence="1">
    <location>
        <begin position="62"/>
        <end position="66"/>
    </location>
    <ligand>
        <name>4-CDP-2-C-methyl-D-erythritol 2-phosphate</name>
        <dbReference type="ChEBI" id="CHEBI:57919"/>
    </ligand>
</feature>
<feature type="binding site" evidence="1">
    <location>
        <begin position="101"/>
        <end position="107"/>
    </location>
    <ligand>
        <name>4-CDP-2-C-methyl-D-erythritol 2-phosphate</name>
        <dbReference type="ChEBI" id="CHEBI:57919"/>
    </ligand>
</feature>
<feature type="binding site" evidence="1">
    <location>
        <begin position="133"/>
        <end position="136"/>
    </location>
    <ligand>
        <name>4-CDP-2-C-methyl-D-erythritol 2-phosphate</name>
        <dbReference type="ChEBI" id="CHEBI:57919"/>
    </ligand>
</feature>
<feature type="binding site" evidence="1">
    <location>
        <position position="140"/>
    </location>
    <ligand>
        <name>4-CDP-2-C-methyl-D-erythritol 2-phosphate</name>
        <dbReference type="ChEBI" id="CHEBI:57919"/>
    </ligand>
</feature>
<feature type="binding site" evidence="1">
    <location>
        <position position="143"/>
    </location>
    <ligand>
        <name>4-CDP-2-C-methyl-D-erythritol 2-phosphate</name>
        <dbReference type="ChEBI" id="CHEBI:57919"/>
    </ligand>
</feature>
<feature type="site" description="Transition state stabilizer" evidence="1">
    <location>
        <position position="35"/>
    </location>
</feature>
<feature type="site" description="Transition state stabilizer" evidence="1">
    <location>
        <position position="134"/>
    </location>
</feature>
<organism>
    <name type="scientific">Listeria monocytogenes serotype 4a (strain HCC23)</name>
    <dbReference type="NCBI Taxonomy" id="552536"/>
    <lineage>
        <taxon>Bacteria</taxon>
        <taxon>Bacillati</taxon>
        <taxon>Bacillota</taxon>
        <taxon>Bacilli</taxon>
        <taxon>Bacillales</taxon>
        <taxon>Listeriaceae</taxon>
        <taxon>Listeria</taxon>
    </lineage>
</organism>
<comment type="function">
    <text evidence="1">Involved in the biosynthesis of isopentenyl diphosphate (IPP) and dimethylallyl diphosphate (DMAPP), two major building blocks of isoprenoid compounds. Catalyzes the conversion of 4-diphosphocytidyl-2-C-methyl-D-erythritol 2-phosphate (CDP-ME2P) to 2-C-methyl-D-erythritol 2,4-cyclodiphosphate (ME-CPP) with a corresponding release of cytidine 5-monophosphate (CMP).</text>
</comment>
<comment type="catalytic activity">
    <reaction evidence="1">
        <text>4-CDP-2-C-methyl-D-erythritol 2-phosphate = 2-C-methyl-D-erythritol 2,4-cyclic diphosphate + CMP</text>
        <dbReference type="Rhea" id="RHEA:23864"/>
        <dbReference type="ChEBI" id="CHEBI:57919"/>
        <dbReference type="ChEBI" id="CHEBI:58483"/>
        <dbReference type="ChEBI" id="CHEBI:60377"/>
        <dbReference type="EC" id="4.6.1.12"/>
    </reaction>
</comment>
<comment type="cofactor">
    <cofactor evidence="1">
        <name>a divalent metal cation</name>
        <dbReference type="ChEBI" id="CHEBI:60240"/>
    </cofactor>
    <text evidence="1">Binds 1 divalent metal cation per subunit.</text>
</comment>
<comment type="pathway">
    <text evidence="1">Isoprenoid biosynthesis; isopentenyl diphosphate biosynthesis via DXP pathway; isopentenyl diphosphate from 1-deoxy-D-xylulose 5-phosphate: step 4/6.</text>
</comment>
<comment type="subunit">
    <text evidence="1">Homotrimer.</text>
</comment>
<comment type="similarity">
    <text evidence="1">Belongs to the IspF family.</text>
</comment>
<protein>
    <recommendedName>
        <fullName evidence="1">2-C-methyl-D-erythritol 2,4-cyclodiphosphate synthase</fullName>
        <shortName evidence="1">MECDP-synthase</shortName>
        <shortName evidence="1">MECPP-synthase</shortName>
        <shortName evidence="1">MECPS</shortName>
        <ecNumber evidence="1">4.6.1.12</ecNumber>
    </recommendedName>
</protein>
<accession>B8DF19</accession>
<evidence type="ECO:0000255" key="1">
    <source>
        <dbReference type="HAMAP-Rule" id="MF_00107"/>
    </source>
</evidence>